<comment type="function">
    <text evidence="1">Contributes to K(+)/H(+) antiport activity by supporting proton efflux to control proton extrusion and homeostasis in chloroplasts in a light-dependent manner to modulate photosynthesis. Prevents excessive induction of non-photochemical quenching (NPQ) under continuous-light conditions. Indirectly promotes efficient inorganic carbon uptake into chloroplasts.</text>
</comment>
<comment type="catalytic activity">
    <reaction evidence="1">
        <text>K(+)(in) + H(+)(out) = K(+)(out) + H(+)(in)</text>
        <dbReference type="Rhea" id="RHEA:29467"/>
        <dbReference type="ChEBI" id="CHEBI:15378"/>
        <dbReference type="ChEBI" id="CHEBI:29103"/>
    </reaction>
</comment>
<comment type="subcellular location">
    <subcellularLocation>
        <location evidence="1">Plastid</location>
        <location evidence="1">Chloroplast inner membrane</location>
        <topology evidence="1">Multi-pass membrane protein</topology>
    </subcellularLocation>
</comment>
<comment type="similarity">
    <text evidence="1 2">Belongs to the CemA family.</text>
</comment>
<gene>
    <name evidence="1" type="primary">cemA</name>
</gene>
<keyword id="KW-0050">Antiport</keyword>
<keyword id="KW-0150">Chloroplast</keyword>
<keyword id="KW-0375">Hydrogen ion transport</keyword>
<keyword id="KW-0406">Ion transport</keyword>
<keyword id="KW-0472">Membrane</keyword>
<keyword id="KW-0934">Plastid</keyword>
<keyword id="KW-1001">Plastid inner membrane</keyword>
<keyword id="KW-0630">Potassium</keyword>
<keyword id="KW-0633">Potassium transport</keyword>
<keyword id="KW-1185">Reference proteome</keyword>
<keyword id="KW-0812">Transmembrane</keyword>
<keyword id="KW-1133">Transmembrane helix</keyword>
<keyword id="KW-0813">Transport</keyword>
<feature type="chain" id="PRO_0000275245" description="Potassium/proton antiporter CemA">
    <location>
        <begin position="1"/>
        <end position="229"/>
    </location>
</feature>
<feature type="transmembrane region" description="Helical" evidence="1">
    <location>
        <begin position="7"/>
        <end position="27"/>
    </location>
</feature>
<feature type="transmembrane region" description="Helical" evidence="1">
    <location>
        <begin position="107"/>
        <end position="127"/>
    </location>
</feature>
<feature type="transmembrane region" description="Helical" evidence="1">
    <location>
        <begin position="189"/>
        <end position="209"/>
    </location>
</feature>
<reference key="1">
    <citation type="journal article" date="2006" name="Mol. Genet. Genomics">
        <title>The chloroplast genome of Nicotiana sylvestris and Nicotiana tomentosiformis: complete sequencing confirms that the Nicotiana sylvestris progenitor is the maternal genome donor of Nicotiana tabacum.</title>
        <authorList>
            <person name="Yukawa M."/>
            <person name="Tsudzuki T."/>
            <person name="Sugiura M."/>
        </authorList>
    </citation>
    <scope>NUCLEOTIDE SEQUENCE [LARGE SCALE GENOMIC DNA]</scope>
</reference>
<name>CEMA_NICSY</name>
<dbReference type="EMBL" id="AB237912">
    <property type="protein sequence ID" value="BAE46664.1"/>
    <property type="molecule type" value="Genomic_DNA"/>
</dbReference>
<dbReference type="RefSeq" id="YP_358689.1">
    <property type="nucleotide sequence ID" value="NC_007500.1"/>
</dbReference>
<dbReference type="GeneID" id="3735123"/>
<dbReference type="KEGG" id="nsy:3735123"/>
<dbReference type="OrthoDB" id="21391at4085"/>
<dbReference type="Proteomes" id="UP000189701">
    <property type="component" value="Chloroplast Pltd"/>
</dbReference>
<dbReference type="GO" id="GO:0009706">
    <property type="term" value="C:chloroplast inner membrane"/>
    <property type="evidence" value="ECO:0007669"/>
    <property type="project" value="UniProtKB-SubCell"/>
</dbReference>
<dbReference type="GO" id="GO:0015297">
    <property type="term" value="F:antiporter activity"/>
    <property type="evidence" value="ECO:0007669"/>
    <property type="project" value="UniProtKB-KW"/>
</dbReference>
<dbReference type="GO" id="GO:0015078">
    <property type="term" value="F:proton transmembrane transporter activity"/>
    <property type="evidence" value="ECO:0007669"/>
    <property type="project" value="UniProtKB-UniRule"/>
</dbReference>
<dbReference type="GO" id="GO:0006813">
    <property type="term" value="P:potassium ion transport"/>
    <property type="evidence" value="ECO:0007669"/>
    <property type="project" value="UniProtKB-UniRule"/>
</dbReference>
<dbReference type="HAMAP" id="MF_01308">
    <property type="entry name" value="CemA_PxcA"/>
    <property type="match status" value="1"/>
</dbReference>
<dbReference type="InterPro" id="IPR004282">
    <property type="entry name" value="CemA"/>
</dbReference>
<dbReference type="PANTHER" id="PTHR33650:SF2">
    <property type="entry name" value="CHLOROPLAST ENVELOPE MEMBRANE PROTEIN"/>
    <property type="match status" value="1"/>
</dbReference>
<dbReference type="PANTHER" id="PTHR33650">
    <property type="entry name" value="CHLOROPLAST ENVELOPE MEMBRANE PROTEIN-RELATED"/>
    <property type="match status" value="1"/>
</dbReference>
<dbReference type="Pfam" id="PF03040">
    <property type="entry name" value="CemA"/>
    <property type="match status" value="1"/>
</dbReference>
<sequence>MAKKKAFTPLFYLASIVFLPWWISFSVNKCLESWVTNWWNTGQSEIFLNNIQEKSLLEKFIELEELLFLDEMIKEYSETHLEEFGIGIHKETIQLIKIQNENRIHTILHFSTNIICFIILSGYSILGNEKLVILNSWAQEFLYNLSDTVKAFSILLLTDLCIGFHSPHGWELMIGSIYKDFGFVHNDQIISGLVSTFPVILDTIFKYWIFRYLNRLSPSLVVIYHSMND</sequence>
<accession>Q3C1I9</accession>
<geneLocation type="chloroplast"/>
<proteinExistence type="inferred from homology"/>
<organism>
    <name type="scientific">Nicotiana sylvestris</name>
    <name type="common">Wood tobacco</name>
    <name type="synonym">South American tobacco</name>
    <dbReference type="NCBI Taxonomy" id="4096"/>
    <lineage>
        <taxon>Eukaryota</taxon>
        <taxon>Viridiplantae</taxon>
        <taxon>Streptophyta</taxon>
        <taxon>Embryophyta</taxon>
        <taxon>Tracheophyta</taxon>
        <taxon>Spermatophyta</taxon>
        <taxon>Magnoliopsida</taxon>
        <taxon>eudicotyledons</taxon>
        <taxon>Gunneridae</taxon>
        <taxon>Pentapetalae</taxon>
        <taxon>asterids</taxon>
        <taxon>lamiids</taxon>
        <taxon>Solanales</taxon>
        <taxon>Solanaceae</taxon>
        <taxon>Nicotianoideae</taxon>
        <taxon>Nicotianeae</taxon>
        <taxon>Nicotiana</taxon>
    </lineage>
</organism>
<evidence type="ECO:0000255" key="1">
    <source>
        <dbReference type="HAMAP-Rule" id="MF_01308"/>
    </source>
</evidence>
<evidence type="ECO:0000305" key="2"/>
<protein>
    <recommendedName>
        <fullName evidence="1">Potassium/proton antiporter CemA</fullName>
    </recommendedName>
    <alternativeName>
        <fullName evidence="1">Chloroplast envelope membrane protein A</fullName>
        <shortName evidence="1">CemA</shortName>
    </alternativeName>
</protein>